<dbReference type="EC" id="4.3.3.7" evidence="1"/>
<dbReference type="EMBL" id="CP000514">
    <property type="protein sequence ID" value="ABM18775.1"/>
    <property type="molecule type" value="Genomic_DNA"/>
</dbReference>
<dbReference type="RefSeq" id="WP_011785174.1">
    <property type="nucleotide sequence ID" value="NC_008740.1"/>
</dbReference>
<dbReference type="SMR" id="A1U1A6"/>
<dbReference type="STRING" id="351348.Maqu_1691"/>
<dbReference type="KEGG" id="maq:Maqu_1691"/>
<dbReference type="eggNOG" id="COG0329">
    <property type="taxonomic scope" value="Bacteria"/>
</dbReference>
<dbReference type="HOGENOM" id="CLU_049343_7_1_6"/>
<dbReference type="OrthoDB" id="9782828at2"/>
<dbReference type="UniPathway" id="UPA00034">
    <property type="reaction ID" value="UER00017"/>
</dbReference>
<dbReference type="Proteomes" id="UP000000998">
    <property type="component" value="Chromosome"/>
</dbReference>
<dbReference type="GO" id="GO:0005829">
    <property type="term" value="C:cytosol"/>
    <property type="evidence" value="ECO:0007669"/>
    <property type="project" value="TreeGrafter"/>
</dbReference>
<dbReference type="GO" id="GO:0008840">
    <property type="term" value="F:4-hydroxy-tetrahydrodipicolinate synthase activity"/>
    <property type="evidence" value="ECO:0007669"/>
    <property type="project" value="UniProtKB-UniRule"/>
</dbReference>
<dbReference type="GO" id="GO:0019877">
    <property type="term" value="P:diaminopimelate biosynthetic process"/>
    <property type="evidence" value="ECO:0007669"/>
    <property type="project" value="UniProtKB-UniRule"/>
</dbReference>
<dbReference type="GO" id="GO:0009089">
    <property type="term" value="P:lysine biosynthetic process via diaminopimelate"/>
    <property type="evidence" value="ECO:0007669"/>
    <property type="project" value="UniProtKB-UniRule"/>
</dbReference>
<dbReference type="CDD" id="cd00950">
    <property type="entry name" value="DHDPS"/>
    <property type="match status" value="1"/>
</dbReference>
<dbReference type="Gene3D" id="3.20.20.70">
    <property type="entry name" value="Aldolase class I"/>
    <property type="match status" value="1"/>
</dbReference>
<dbReference type="HAMAP" id="MF_00418">
    <property type="entry name" value="DapA"/>
    <property type="match status" value="1"/>
</dbReference>
<dbReference type="InterPro" id="IPR013785">
    <property type="entry name" value="Aldolase_TIM"/>
</dbReference>
<dbReference type="InterPro" id="IPR005263">
    <property type="entry name" value="DapA"/>
</dbReference>
<dbReference type="InterPro" id="IPR002220">
    <property type="entry name" value="DapA-like"/>
</dbReference>
<dbReference type="InterPro" id="IPR020625">
    <property type="entry name" value="Schiff_base-form_aldolases_AS"/>
</dbReference>
<dbReference type="InterPro" id="IPR020624">
    <property type="entry name" value="Schiff_base-form_aldolases_CS"/>
</dbReference>
<dbReference type="NCBIfam" id="TIGR00674">
    <property type="entry name" value="dapA"/>
    <property type="match status" value="1"/>
</dbReference>
<dbReference type="PANTHER" id="PTHR12128:SF66">
    <property type="entry name" value="4-HYDROXY-2-OXOGLUTARATE ALDOLASE, MITOCHONDRIAL"/>
    <property type="match status" value="1"/>
</dbReference>
<dbReference type="PANTHER" id="PTHR12128">
    <property type="entry name" value="DIHYDRODIPICOLINATE SYNTHASE"/>
    <property type="match status" value="1"/>
</dbReference>
<dbReference type="Pfam" id="PF00701">
    <property type="entry name" value="DHDPS"/>
    <property type="match status" value="1"/>
</dbReference>
<dbReference type="PIRSF" id="PIRSF001365">
    <property type="entry name" value="DHDPS"/>
    <property type="match status" value="1"/>
</dbReference>
<dbReference type="PRINTS" id="PR00146">
    <property type="entry name" value="DHPICSNTHASE"/>
</dbReference>
<dbReference type="SMART" id="SM01130">
    <property type="entry name" value="DHDPS"/>
    <property type="match status" value="1"/>
</dbReference>
<dbReference type="SUPFAM" id="SSF51569">
    <property type="entry name" value="Aldolase"/>
    <property type="match status" value="1"/>
</dbReference>
<dbReference type="PROSITE" id="PS00665">
    <property type="entry name" value="DHDPS_1"/>
    <property type="match status" value="1"/>
</dbReference>
<dbReference type="PROSITE" id="PS00666">
    <property type="entry name" value="DHDPS_2"/>
    <property type="match status" value="1"/>
</dbReference>
<comment type="function">
    <text evidence="1">Catalyzes the condensation of (S)-aspartate-beta-semialdehyde [(S)-ASA] and pyruvate to 4-hydroxy-tetrahydrodipicolinate (HTPA).</text>
</comment>
<comment type="catalytic activity">
    <reaction evidence="1">
        <text>L-aspartate 4-semialdehyde + pyruvate = (2S,4S)-4-hydroxy-2,3,4,5-tetrahydrodipicolinate + H2O + H(+)</text>
        <dbReference type="Rhea" id="RHEA:34171"/>
        <dbReference type="ChEBI" id="CHEBI:15361"/>
        <dbReference type="ChEBI" id="CHEBI:15377"/>
        <dbReference type="ChEBI" id="CHEBI:15378"/>
        <dbReference type="ChEBI" id="CHEBI:67139"/>
        <dbReference type="ChEBI" id="CHEBI:537519"/>
        <dbReference type="EC" id="4.3.3.7"/>
    </reaction>
</comment>
<comment type="pathway">
    <text evidence="1">Amino-acid biosynthesis; L-lysine biosynthesis via DAP pathway; (S)-tetrahydrodipicolinate from L-aspartate: step 3/4.</text>
</comment>
<comment type="subunit">
    <text evidence="1">Homotetramer; dimer of dimers.</text>
</comment>
<comment type="subcellular location">
    <subcellularLocation>
        <location evidence="1">Cytoplasm</location>
    </subcellularLocation>
</comment>
<comment type="similarity">
    <text evidence="1">Belongs to the DapA family.</text>
</comment>
<comment type="caution">
    <text evidence="2">Was originally thought to be a dihydrodipicolinate synthase (DHDPS), catalyzing the condensation of (S)-aspartate-beta-semialdehyde [(S)-ASA] and pyruvate to dihydrodipicolinate (DHDP). However, it was shown in E.coli that the product of the enzymatic reaction is not dihydrodipicolinate but in fact (4S)-4-hydroxy-2,3,4,5-tetrahydro-(2S)-dipicolinic acid (HTPA), and that the consecutive dehydration reaction leading to DHDP is not spontaneous but catalyzed by DapB.</text>
</comment>
<accession>A1U1A6</accession>
<sequence>MITGSLVALVTPMYPNGDIHWEDLDKLVDFHIENGTHGIVAVGTTGESATLDPEEHIRTIGHIIKRVNGRIPVIAGTGGNSTREAIELTTEAHKLGADACLLVVPYYNKPTQEGLYQHFKAIAEAVPGMSQILYNVPGRTACDMLNETVVRLADIPNIVGIKDATGNIPRGAELIEALDGRLAVYSGDDATAADLMLAGAKGNVSVTANVAPKAMAELCEAAIAGNEDETRRLNELLMPLNRKLFLEANPIPVKWALYRMGMIGEGIRLPLTPLSEKFHGEVEDALKASGVL</sequence>
<name>DAPA_MARN8</name>
<gene>
    <name evidence="1" type="primary">dapA</name>
    <name type="ordered locus">Maqu_1691</name>
</gene>
<keyword id="KW-0028">Amino-acid biosynthesis</keyword>
<keyword id="KW-0963">Cytoplasm</keyword>
<keyword id="KW-0220">Diaminopimelate biosynthesis</keyword>
<keyword id="KW-0456">Lyase</keyword>
<keyword id="KW-0457">Lysine biosynthesis</keyword>
<keyword id="KW-0704">Schiff base</keyword>
<feature type="chain" id="PRO_1000050211" description="4-hydroxy-tetrahydrodipicolinate synthase">
    <location>
        <begin position="1"/>
        <end position="292"/>
    </location>
</feature>
<feature type="active site" description="Proton donor/acceptor" evidence="1">
    <location>
        <position position="134"/>
    </location>
</feature>
<feature type="active site" description="Schiff-base intermediate with substrate" evidence="1">
    <location>
        <position position="162"/>
    </location>
</feature>
<feature type="binding site" evidence="1">
    <location>
        <position position="45"/>
    </location>
    <ligand>
        <name>pyruvate</name>
        <dbReference type="ChEBI" id="CHEBI:15361"/>
    </ligand>
</feature>
<feature type="binding site" evidence="1">
    <location>
        <position position="204"/>
    </location>
    <ligand>
        <name>pyruvate</name>
        <dbReference type="ChEBI" id="CHEBI:15361"/>
    </ligand>
</feature>
<feature type="site" description="Part of a proton relay during catalysis" evidence="1">
    <location>
        <position position="44"/>
    </location>
</feature>
<feature type="site" description="Part of a proton relay during catalysis" evidence="1">
    <location>
        <position position="107"/>
    </location>
</feature>
<reference key="1">
    <citation type="journal article" date="2011" name="Appl. Environ. Microbiol.">
        <title>Genomic potential of Marinobacter aquaeolei, a biogeochemical 'opportunitroph'.</title>
        <authorList>
            <person name="Singer E."/>
            <person name="Webb E.A."/>
            <person name="Nelson W.C."/>
            <person name="Heidelberg J.F."/>
            <person name="Ivanova N."/>
            <person name="Pati A."/>
            <person name="Edwards K.J."/>
        </authorList>
    </citation>
    <scope>NUCLEOTIDE SEQUENCE [LARGE SCALE GENOMIC DNA]</scope>
    <source>
        <strain>ATCC 700491 / DSM 11845 / VT8</strain>
    </source>
</reference>
<organism>
    <name type="scientific">Marinobacter nauticus (strain ATCC 700491 / DSM 11845 / VT8)</name>
    <name type="common">Marinobacter aquaeolei</name>
    <dbReference type="NCBI Taxonomy" id="351348"/>
    <lineage>
        <taxon>Bacteria</taxon>
        <taxon>Pseudomonadati</taxon>
        <taxon>Pseudomonadota</taxon>
        <taxon>Gammaproteobacteria</taxon>
        <taxon>Pseudomonadales</taxon>
        <taxon>Marinobacteraceae</taxon>
        <taxon>Marinobacter</taxon>
    </lineage>
</organism>
<proteinExistence type="inferred from homology"/>
<evidence type="ECO:0000255" key="1">
    <source>
        <dbReference type="HAMAP-Rule" id="MF_00418"/>
    </source>
</evidence>
<evidence type="ECO:0000305" key="2"/>
<protein>
    <recommendedName>
        <fullName evidence="1">4-hydroxy-tetrahydrodipicolinate synthase</fullName>
        <shortName evidence="1">HTPA synthase</shortName>
        <ecNumber evidence="1">4.3.3.7</ecNumber>
    </recommendedName>
</protein>